<proteinExistence type="evidence at protein level"/>
<sequence>MADARKNNVTIKVGMIGDSSIGKTSLMVTYVQGSFDEESTQTLGVNFMEKTISIRNTEITFSIWDLGGQREFVNMLPMVCNDAVAILFMFDLSRKSTLNSIKEWYRQARGFNKTAVPILIGTKYDHFMTFPREDQEEITKQARRYAKAMKASLVFCSTSHSINVQKIFKIVLAKVFDLKCTIPEIKNVGDPILEYIDR</sequence>
<accession>P87027</accession>
<accession>O14312</accession>
<reference key="1">
    <citation type="journal article" date="1997" name="Genes Dev.">
        <title>The Spg1p GTPase is an essential, dosage-dependent inducer of septum formation in Schizosaccharomyces pombe.</title>
        <authorList>
            <person name="Schmidt S."/>
            <person name="Sohrmann M."/>
            <person name="Hofmann K."/>
            <person name="Woollard A."/>
            <person name="Simanis V."/>
        </authorList>
    </citation>
    <scope>NUCLEOTIDE SEQUENCE [GENOMIC DNA]</scope>
    <scope>FUNCTION</scope>
    <scope>INTERACTION WITH CDC7</scope>
</reference>
<reference key="2">
    <citation type="journal article" date="1998" name="Genetics">
        <title>Isolation and characterization of new fission yeast cytokinesis mutants.</title>
        <authorList>
            <person name="Balasubramanian M.K."/>
            <person name="McCollum D."/>
            <person name="Chang L."/>
            <person name="Wong K.C.Y."/>
            <person name="Naqvi N.I."/>
            <person name="He X."/>
            <person name="Sazer S."/>
            <person name="Gould K.L."/>
        </authorList>
    </citation>
    <scope>NUCLEOTIDE SEQUENCE [GENOMIC DNA]</scope>
</reference>
<reference key="3">
    <citation type="journal article" date="2002" name="Nature">
        <title>The genome sequence of Schizosaccharomyces pombe.</title>
        <authorList>
            <person name="Wood V."/>
            <person name="Gwilliam R."/>
            <person name="Rajandream M.A."/>
            <person name="Lyne M.H."/>
            <person name="Lyne R."/>
            <person name="Stewart A."/>
            <person name="Sgouros J.G."/>
            <person name="Peat N."/>
            <person name="Hayles J."/>
            <person name="Baker S.G."/>
            <person name="Basham D."/>
            <person name="Bowman S."/>
            <person name="Brooks K."/>
            <person name="Brown D."/>
            <person name="Brown S."/>
            <person name="Chillingworth T."/>
            <person name="Churcher C.M."/>
            <person name="Collins M."/>
            <person name="Connor R."/>
            <person name="Cronin A."/>
            <person name="Davis P."/>
            <person name="Feltwell T."/>
            <person name="Fraser A."/>
            <person name="Gentles S."/>
            <person name="Goble A."/>
            <person name="Hamlin N."/>
            <person name="Harris D.E."/>
            <person name="Hidalgo J."/>
            <person name="Hodgson G."/>
            <person name="Holroyd S."/>
            <person name="Hornsby T."/>
            <person name="Howarth S."/>
            <person name="Huckle E.J."/>
            <person name="Hunt S."/>
            <person name="Jagels K."/>
            <person name="James K.D."/>
            <person name="Jones L."/>
            <person name="Jones M."/>
            <person name="Leather S."/>
            <person name="McDonald S."/>
            <person name="McLean J."/>
            <person name="Mooney P."/>
            <person name="Moule S."/>
            <person name="Mungall K.L."/>
            <person name="Murphy L.D."/>
            <person name="Niblett D."/>
            <person name="Odell C."/>
            <person name="Oliver K."/>
            <person name="O'Neil S."/>
            <person name="Pearson D."/>
            <person name="Quail M.A."/>
            <person name="Rabbinowitsch E."/>
            <person name="Rutherford K.M."/>
            <person name="Rutter S."/>
            <person name="Saunders D."/>
            <person name="Seeger K."/>
            <person name="Sharp S."/>
            <person name="Skelton J."/>
            <person name="Simmonds M.N."/>
            <person name="Squares R."/>
            <person name="Squares S."/>
            <person name="Stevens K."/>
            <person name="Taylor K."/>
            <person name="Taylor R.G."/>
            <person name="Tivey A."/>
            <person name="Walsh S.V."/>
            <person name="Warren T."/>
            <person name="Whitehead S."/>
            <person name="Woodward J.R."/>
            <person name="Volckaert G."/>
            <person name="Aert R."/>
            <person name="Robben J."/>
            <person name="Grymonprez B."/>
            <person name="Weltjens I."/>
            <person name="Vanstreels E."/>
            <person name="Rieger M."/>
            <person name="Schaefer M."/>
            <person name="Mueller-Auer S."/>
            <person name="Gabel C."/>
            <person name="Fuchs M."/>
            <person name="Duesterhoeft A."/>
            <person name="Fritzc C."/>
            <person name="Holzer E."/>
            <person name="Moestl D."/>
            <person name="Hilbert H."/>
            <person name="Borzym K."/>
            <person name="Langer I."/>
            <person name="Beck A."/>
            <person name="Lehrach H."/>
            <person name="Reinhardt R."/>
            <person name="Pohl T.M."/>
            <person name="Eger P."/>
            <person name="Zimmermann W."/>
            <person name="Wedler H."/>
            <person name="Wambutt R."/>
            <person name="Purnelle B."/>
            <person name="Goffeau A."/>
            <person name="Cadieu E."/>
            <person name="Dreano S."/>
            <person name="Gloux S."/>
            <person name="Lelaure V."/>
            <person name="Mottier S."/>
            <person name="Galibert F."/>
            <person name="Aves S.J."/>
            <person name="Xiang Z."/>
            <person name="Hunt C."/>
            <person name="Moore K."/>
            <person name="Hurst S.M."/>
            <person name="Lucas M."/>
            <person name="Rochet M."/>
            <person name="Gaillardin C."/>
            <person name="Tallada V.A."/>
            <person name="Garzon A."/>
            <person name="Thode G."/>
            <person name="Daga R.R."/>
            <person name="Cruzado L."/>
            <person name="Jimenez J."/>
            <person name="Sanchez M."/>
            <person name="del Rey F."/>
            <person name="Benito J."/>
            <person name="Dominguez A."/>
            <person name="Revuelta J.L."/>
            <person name="Moreno S."/>
            <person name="Armstrong J."/>
            <person name="Forsburg S.L."/>
            <person name="Cerutti L."/>
            <person name="Lowe T."/>
            <person name="McCombie W.R."/>
            <person name="Paulsen I."/>
            <person name="Potashkin J."/>
            <person name="Shpakovski G.V."/>
            <person name="Ussery D."/>
            <person name="Barrell B.G."/>
            <person name="Nurse P."/>
        </authorList>
    </citation>
    <scope>NUCLEOTIDE SEQUENCE [LARGE SCALE GENOMIC DNA]</scope>
    <source>
        <strain>972 / ATCC 24843</strain>
    </source>
</reference>
<reference key="4">
    <citation type="journal article" date="2004" name="Curr. Biol.">
        <title>Sid4p-Cdc11p assembles the septation initiation network and its regulators at the S. pombe SPB.</title>
        <authorList>
            <person name="Morrell J.L."/>
            <person name="Tomlin G.C."/>
            <person name="Rajagopalan S."/>
            <person name="Venkatram S."/>
            <person name="Feoktistova A.S."/>
            <person name="Tasto J.J."/>
            <person name="Mehta S."/>
            <person name="Jennings J.L."/>
            <person name="Link A."/>
            <person name="Balasubramanian M.K."/>
            <person name="Gould K.L."/>
        </authorList>
    </citation>
    <scope>INTERACTION WITH CDC11</scope>
</reference>
<gene>
    <name type="primary">spg1</name>
    <name type="synonym">sid3</name>
    <name type="ORF">SPAC1565.06c</name>
</gene>
<feature type="chain" id="PRO_0000122465" description="Septum-promoting GTP-binding protein 1">
    <location>
        <begin position="1"/>
        <end position="198"/>
    </location>
</feature>
<feature type="region of interest" description="Small GTPase-like">
    <location>
        <begin position="6"/>
        <end position="198"/>
    </location>
</feature>
<feature type="binding site" evidence="1">
    <location>
        <begin position="17"/>
        <end position="24"/>
    </location>
    <ligand>
        <name>GTP</name>
        <dbReference type="ChEBI" id="CHEBI:37565"/>
    </ligand>
</feature>
<feature type="binding site" evidence="1">
    <location>
        <begin position="65"/>
        <end position="69"/>
    </location>
    <ligand>
        <name>GTP</name>
        <dbReference type="ChEBI" id="CHEBI:37565"/>
    </ligand>
</feature>
<feature type="binding site" evidence="1">
    <location>
        <begin position="122"/>
        <end position="125"/>
    </location>
    <ligand>
        <name>GTP</name>
        <dbReference type="ChEBI" id="CHEBI:37565"/>
    </ligand>
</feature>
<feature type="sequence conflict" description="In Ref. 2; CAA04846." evidence="4" ref="2">
    <original>L</original>
    <variation>LV</variation>
    <location>
        <position position="43"/>
    </location>
</feature>
<protein>
    <recommendedName>
        <fullName>Septum-promoting GTP-binding protein 1</fullName>
    </recommendedName>
    <alternativeName>
        <fullName>GTPase spg1</fullName>
    </alternativeName>
    <alternativeName>
        <fullName>Sid3 protein</fullName>
    </alternativeName>
</protein>
<evidence type="ECO:0000250" key="1"/>
<evidence type="ECO:0000269" key="2">
    <source>
    </source>
</evidence>
<evidence type="ECO:0000269" key="3">
    <source>
    </source>
</evidence>
<evidence type="ECO:0000305" key="4"/>
<name>SPG1_SCHPO</name>
<comment type="function">
    <text evidence="3">GTP-binding protein essential for the induction of septum formation at G2 and pre-START stages of mitosis. Acts via the cdc7 protein kinase pathway.</text>
</comment>
<comment type="subunit">
    <text evidence="2 3">Interacts with cdc7 and cdc11.</text>
</comment>
<comment type="interaction">
    <interactant intactId="EBI-1999803">
        <id>P87027</id>
    </interactant>
    <interactant intactId="EBI-1997311">
        <id>Q10951</id>
        <label>byr4</label>
    </interactant>
    <organismsDiffer>false</organismsDiffer>
    <experiments>7</experiments>
</comment>
<organism>
    <name type="scientific">Schizosaccharomyces pombe (strain 972 / ATCC 24843)</name>
    <name type="common">Fission yeast</name>
    <dbReference type="NCBI Taxonomy" id="284812"/>
    <lineage>
        <taxon>Eukaryota</taxon>
        <taxon>Fungi</taxon>
        <taxon>Dikarya</taxon>
        <taxon>Ascomycota</taxon>
        <taxon>Taphrinomycotina</taxon>
        <taxon>Schizosaccharomycetes</taxon>
        <taxon>Schizosaccharomycetales</taxon>
        <taxon>Schizosaccharomycetaceae</taxon>
        <taxon>Schizosaccharomyces</taxon>
    </lineage>
</organism>
<keyword id="KW-0131">Cell cycle</keyword>
<keyword id="KW-0132">Cell division</keyword>
<keyword id="KW-0342">GTP-binding</keyword>
<keyword id="KW-0498">Mitosis</keyword>
<keyword id="KW-0547">Nucleotide-binding</keyword>
<keyword id="KW-1185">Reference proteome</keyword>
<dbReference type="EMBL" id="Y12314">
    <property type="protein sequence ID" value="CAA72985.1"/>
    <property type="molecule type" value="Genomic_DNA"/>
</dbReference>
<dbReference type="EMBL" id="AJ001587">
    <property type="protein sequence ID" value="CAA04846.1"/>
    <property type="molecule type" value="Genomic_DNA"/>
</dbReference>
<dbReference type="EMBL" id="CU329670">
    <property type="protein sequence ID" value="CAB99273.1"/>
    <property type="molecule type" value="Genomic_DNA"/>
</dbReference>
<dbReference type="PIR" id="T45541">
    <property type="entry name" value="T45541"/>
</dbReference>
<dbReference type="RefSeq" id="NP_593285.1">
    <property type="nucleotide sequence ID" value="NM_001018715.2"/>
</dbReference>
<dbReference type="SMR" id="P87027"/>
<dbReference type="BioGRID" id="279211">
    <property type="interactions" value="46"/>
</dbReference>
<dbReference type="FunCoup" id="P87027">
    <property type="interactions" value="392"/>
</dbReference>
<dbReference type="IntAct" id="P87027">
    <property type="interactions" value="2"/>
</dbReference>
<dbReference type="STRING" id="284812.P87027"/>
<dbReference type="iPTMnet" id="P87027"/>
<dbReference type="PaxDb" id="4896-SPAC1565.06c.1"/>
<dbReference type="EnsemblFungi" id="SPAC1565.06c.1">
    <property type="protein sequence ID" value="SPAC1565.06c.1:pep"/>
    <property type="gene ID" value="SPAC1565.06c"/>
</dbReference>
<dbReference type="GeneID" id="2542761"/>
<dbReference type="KEGG" id="spo:2542761"/>
<dbReference type="PomBase" id="SPAC1565.06c">
    <property type="gene designation" value="spg1"/>
</dbReference>
<dbReference type="VEuPathDB" id="FungiDB:SPAC1565.06c"/>
<dbReference type="eggNOG" id="KOG1673">
    <property type="taxonomic scope" value="Eukaryota"/>
</dbReference>
<dbReference type="HOGENOM" id="CLU_041217_0_2_1"/>
<dbReference type="InParanoid" id="P87027"/>
<dbReference type="OMA" id="IWDRIFL"/>
<dbReference type="PhylomeDB" id="P87027"/>
<dbReference type="CD-CODE" id="576F0A76">
    <property type="entry name" value="Centrosome"/>
</dbReference>
<dbReference type="PRO" id="PR:P87027"/>
<dbReference type="Proteomes" id="UP000002485">
    <property type="component" value="Chromosome I"/>
</dbReference>
<dbReference type="GO" id="GO:0044732">
    <property type="term" value="C:mitotic spindle pole body"/>
    <property type="evidence" value="ECO:0000314"/>
    <property type="project" value="PomBase"/>
</dbReference>
<dbReference type="GO" id="GO:0005816">
    <property type="term" value="C:spindle pole body"/>
    <property type="evidence" value="ECO:0000318"/>
    <property type="project" value="GO_Central"/>
</dbReference>
<dbReference type="GO" id="GO:0005525">
    <property type="term" value="F:GTP binding"/>
    <property type="evidence" value="ECO:0000314"/>
    <property type="project" value="PomBase"/>
</dbReference>
<dbReference type="GO" id="GO:0003924">
    <property type="term" value="F:GTPase activity"/>
    <property type="evidence" value="ECO:0000314"/>
    <property type="project" value="PomBase"/>
</dbReference>
<dbReference type="GO" id="GO:0035591">
    <property type="term" value="F:signaling adaptor activity"/>
    <property type="evidence" value="ECO:0000314"/>
    <property type="project" value="PomBase"/>
</dbReference>
<dbReference type="GO" id="GO:0051301">
    <property type="term" value="P:cell division"/>
    <property type="evidence" value="ECO:0007669"/>
    <property type="project" value="UniProtKB-KW"/>
</dbReference>
<dbReference type="GO" id="GO:0140281">
    <property type="term" value="P:positive regulation of mitotic division septum assembly"/>
    <property type="evidence" value="ECO:0000315"/>
    <property type="project" value="PomBase"/>
</dbReference>
<dbReference type="GO" id="GO:0031028">
    <property type="term" value="P:septation initiation signaling"/>
    <property type="evidence" value="ECO:0000316"/>
    <property type="project" value="PomBase"/>
</dbReference>
<dbReference type="CDD" id="cd04128">
    <property type="entry name" value="Spg1"/>
    <property type="match status" value="1"/>
</dbReference>
<dbReference type="FunFam" id="3.40.50.300:FF:000330">
    <property type="entry name" value="Septum-promoting GTP-binding protein 1"/>
    <property type="match status" value="1"/>
</dbReference>
<dbReference type="Gene3D" id="3.40.50.300">
    <property type="entry name" value="P-loop containing nucleotide triphosphate hydrolases"/>
    <property type="match status" value="1"/>
</dbReference>
<dbReference type="InterPro" id="IPR027417">
    <property type="entry name" value="P-loop_NTPase"/>
</dbReference>
<dbReference type="InterPro" id="IPR005225">
    <property type="entry name" value="Small_GTP-bd"/>
</dbReference>
<dbReference type="InterPro" id="IPR001806">
    <property type="entry name" value="Small_GTPase"/>
</dbReference>
<dbReference type="InterPro" id="IPR017231">
    <property type="entry name" value="Small_GTPase_Tem1/Spg1"/>
</dbReference>
<dbReference type="NCBIfam" id="TIGR00231">
    <property type="entry name" value="small_GTP"/>
    <property type="match status" value="1"/>
</dbReference>
<dbReference type="PANTHER" id="PTHR47978">
    <property type="match status" value="1"/>
</dbReference>
<dbReference type="Pfam" id="PF00071">
    <property type="entry name" value="Ras"/>
    <property type="match status" value="1"/>
</dbReference>
<dbReference type="PIRSF" id="PIRSF037527">
    <property type="entry name" value="Small_GTPase_Tem1"/>
    <property type="match status" value="1"/>
</dbReference>
<dbReference type="PRINTS" id="PR00449">
    <property type="entry name" value="RASTRNSFRMNG"/>
</dbReference>
<dbReference type="SMART" id="SM00175">
    <property type="entry name" value="RAB"/>
    <property type="match status" value="1"/>
</dbReference>
<dbReference type="SMART" id="SM00173">
    <property type="entry name" value="RAS"/>
    <property type="match status" value="1"/>
</dbReference>
<dbReference type="SMART" id="SM00174">
    <property type="entry name" value="RHO"/>
    <property type="match status" value="1"/>
</dbReference>
<dbReference type="SUPFAM" id="SSF52540">
    <property type="entry name" value="P-loop containing nucleoside triphosphate hydrolases"/>
    <property type="match status" value="1"/>
</dbReference>
<dbReference type="PROSITE" id="PS51419">
    <property type="entry name" value="RAB"/>
    <property type="match status" value="1"/>
</dbReference>